<evidence type="ECO:0000255" key="1">
    <source>
        <dbReference type="HAMAP-Rule" id="MF_00141"/>
    </source>
</evidence>
<proteinExistence type="inferred from homology"/>
<keyword id="KW-0963">Cytoplasm</keyword>
<keyword id="KW-0251">Elongation factor</keyword>
<keyword id="KW-0648">Protein biosynthesis</keyword>
<protein>
    <recommendedName>
        <fullName evidence="1">Elongation factor P</fullName>
        <shortName evidence="1">EF-P</shortName>
    </recommendedName>
</protein>
<organism>
    <name type="scientific">Rickettsia africae (strain ESF-5)</name>
    <dbReference type="NCBI Taxonomy" id="347255"/>
    <lineage>
        <taxon>Bacteria</taxon>
        <taxon>Pseudomonadati</taxon>
        <taxon>Pseudomonadota</taxon>
        <taxon>Alphaproteobacteria</taxon>
        <taxon>Rickettsiales</taxon>
        <taxon>Rickettsiaceae</taxon>
        <taxon>Rickettsieae</taxon>
        <taxon>Rickettsia</taxon>
        <taxon>spotted fever group</taxon>
    </lineage>
</organism>
<name>EFP_RICAE</name>
<comment type="function">
    <text evidence="1">Involved in peptide bond synthesis. Stimulates efficient translation and peptide-bond synthesis on native or reconstituted 70S ribosomes in vitro. Probably functions indirectly by altering the affinity of the ribosome for aminoacyl-tRNA, thus increasing their reactivity as acceptors for peptidyl transferase.</text>
</comment>
<comment type="pathway">
    <text evidence="1">Protein biosynthesis; polypeptide chain elongation.</text>
</comment>
<comment type="subcellular location">
    <subcellularLocation>
        <location evidence="1">Cytoplasm</location>
    </subcellularLocation>
</comment>
<comment type="similarity">
    <text evidence="1">Belongs to the elongation factor P family.</text>
</comment>
<reference key="1">
    <citation type="journal article" date="2009" name="BMC Genomics">
        <title>Analysis of the Rickettsia africae genome reveals that virulence acquisition in Rickettsia species may be explained by genome reduction.</title>
        <authorList>
            <person name="Fournier P.-E."/>
            <person name="El Karkouri K."/>
            <person name="Leroy Q."/>
            <person name="Robert C."/>
            <person name="Giumelli B."/>
            <person name="Renesto P."/>
            <person name="Socolovschi C."/>
            <person name="Parola P."/>
            <person name="Audic S."/>
            <person name="Raoult D."/>
        </authorList>
    </citation>
    <scope>NUCLEOTIDE SEQUENCE [LARGE SCALE GENOMIC DNA]</scope>
    <source>
        <strain>ESF-5</strain>
    </source>
</reference>
<accession>C3PMT5</accession>
<gene>
    <name evidence="1" type="primary">efp</name>
    <name type="ordered locus">RAF_ORF0299</name>
</gene>
<dbReference type="EMBL" id="CP001612">
    <property type="protein sequence ID" value="ACP53245.1"/>
    <property type="molecule type" value="Genomic_DNA"/>
</dbReference>
<dbReference type="RefSeq" id="WP_012719501.1">
    <property type="nucleotide sequence ID" value="NC_012633.1"/>
</dbReference>
<dbReference type="SMR" id="C3PMT5"/>
<dbReference type="KEGG" id="raf:RAF_ORF0299"/>
<dbReference type="HOGENOM" id="CLU_074944_1_1_5"/>
<dbReference type="UniPathway" id="UPA00345"/>
<dbReference type="Proteomes" id="UP000002305">
    <property type="component" value="Chromosome"/>
</dbReference>
<dbReference type="GO" id="GO:0005737">
    <property type="term" value="C:cytoplasm"/>
    <property type="evidence" value="ECO:0007669"/>
    <property type="project" value="UniProtKB-SubCell"/>
</dbReference>
<dbReference type="GO" id="GO:0003746">
    <property type="term" value="F:translation elongation factor activity"/>
    <property type="evidence" value="ECO:0007669"/>
    <property type="project" value="UniProtKB-UniRule"/>
</dbReference>
<dbReference type="GO" id="GO:0043043">
    <property type="term" value="P:peptide biosynthetic process"/>
    <property type="evidence" value="ECO:0007669"/>
    <property type="project" value="InterPro"/>
</dbReference>
<dbReference type="CDD" id="cd04470">
    <property type="entry name" value="S1_EF-P_repeat_1"/>
    <property type="match status" value="1"/>
</dbReference>
<dbReference type="FunFam" id="2.40.50.140:FF:000004">
    <property type="entry name" value="Elongation factor P"/>
    <property type="match status" value="1"/>
</dbReference>
<dbReference type="FunFam" id="2.40.50.140:FF:000009">
    <property type="entry name" value="Elongation factor P"/>
    <property type="match status" value="1"/>
</dbReference>
<dbReference type="Gene3D" id="2.30.30.30">
    <property type="match status" value="1"/>
</dbReference>
<dbReference type="Gene3D" id="2.40.50.140">
    <property type="entry name" value="Nucleic acid-binding proteins"/>
    <property type="match status" value="2"/>
</dbReference>
<dbReference type="HAMAP" id="MF_00141">
    <property type="entry name" value="EF_P"/>
    <property type="match status" value="1"/>
</dbReference>
<dbReference type="InterPro" id="IPR015365">
    <property type="entry name" value="Elong-fact-P_C"/>
</dbReference>
<dbReference type="InterPro" id="IPR012340">
    <property type="entry name" value="NA-bd_OB-fold"/>
</dbReference>
<dbReference type="InterPro" id="IPR014722">
    <property type="entry name" value="Rib_uL2_dom2"/>
</dbReference>
<dbReference type="InterPro" id="IPR020599">
    <property type="entry name" value="Transl_elong_fac_P/YeiP"/>
</dbReference>
<dbReference type="InterPro" id="IPR013185">
    <property type="entry name" value="Transl_elong_KOW-like"/>
</dbReference>
<dbReference type="InterPro" id="IPR001059">
    <property type="entry name" value="Transl_elong_P/YeiP_cen"/>
</dbReference>
<dbReference type="InterPro" id="IPR013852">
    <property type="entry name" value="Transl_elong_P/YeiP_CS"/>
</dbReference>
<dbReference type="InterPro" id="IPR011768">
    <property type="entry name" value="Transl_elongation_fac_P"/>
</dbReference>
<dbReference type="InterPro" id="IPR008991">
    <property type="entry name" value="Translation_prot_SH3-like_sf"/>
</dbReference>
<dbReference type="NCBIfam" id="TIGR00038">
    <property type="entry name" value="efp"/>
    <property type="match status" value="1"/>
</dbReference>
<dbReference type="NCBIfam" id="NF001810">
    <property type="entry name" value="PRK00529.1"/>
    <property type="match status" value="1"/>
</dbReference>
<dbReference type="PANTHER" id="PTHR30053">
    <property type="entry name" value="ELONGATION FACTOR P"/>
    <property type="match status" value="1"/>
</dbReference>
<dbReference type="PANTHER" id="PTHR30053:SF14">
    <property type="entry name" value="TRANSLATION ELONGATION FACTOR KOW-LIKE DOMAIN-CONTAINING PROTEIN"/>
    <property type="match status" value="1"/>
</dbReference>
<dbReference type="Pfam" id="PF01132">
    <property type="entry name" value="EFP"/>
    <property type="match status" value="1"/>
</dbReference>
<dbReference type="Pfam" id="PF08207">
    <property type="entry name" value="EFP_N"/>
    <property type="match status" value="1"/>
</dbReference>
<dbReference type="Pfam" id="PF09285">
    <property type="entry name" value="Elong-fact-P_C"/>
    <property type="match status" value="1"/>
</dbReference>
<dbReference type="PIRSF" id="PIRSF005901">
    <property type="entry name" value="EF-P"/>
    <property type="match status" value="1"/>
</dbReference>
<dbReference type="SMART" id="SM01185">
    <property type="entry name" value="EFP"/>
    <property type="match status" value="1"/>
</dbReference>
<dbReference type="SMART" id="SM00841">
    <property type="entry name" value="Elong-fact-P_C"/>
    <property type="match status" value="1"/>
</dbReference>
<dbReference type="SUPFAM" id="SSF50249">
    <property type="entry name" value="Nucleic acid-binding proteins"/>
    <property type="match status" value="2"/>
</dbReference>
<dbReference type="SUPFAM" id="SSF50104">
    <property type="entry name" value="Translation proteins SH3-like domain"/>
    <property type="match status" value="1"/>
</dbReference>
<dbReference type="PROSITE" id="PS01275">
    <property type="entry name" value="EFP"/>
    <property type="match status" value="1"/>
</dbReference>
<feature type="chain" id="PRO_1000203278" description="Elongation factor P">
    <location>
        <begin position="1"/>
        <end position="188"/>
    </location>
</feature>
<sequence length="188" mass="21458">MKISANSIRTGNILVYNNDLWVVSKTPEHTQPGKGGAYVQVEMKNLKTGTKRNERFSSANYLEKAELEQKDYQFLYFEGDDLVLMDTKHFDQINISKEMLEEKLSFLTENMIVKVEFYNDKPLNIELPPTVILEISETDPVIKGATATASYKPAILENGIKVKVPQYLEIGEKIVVKTDDMTYVERAK</sequence>